<dbReference type="EMBL" id="X13585">
    <property type="protein sequence ID" value="CAA31926.1"/>
    <property type="molecule type" value="mRNA"/>
</dbReference>
<dbReference type="EMBL" id="M22348">
    <property type="protein sequence ID" value="AAA60238.1"/>
    <property type="molecule type" value="mRNA"/>
</dbReference>
<dbReference type="EMBL" id="CR542176">
    <property type="protein sequence ID" value="CAG46973.1"/>
    <property type="molecule type" value="mRNA"/>
</dbReference>
<dbReference type="EMBL" id="CR542196">
    <property type="protein sequence ID" value="CAG46993.1"/>
    <property type="molecule type" value="mRNA"/>
</dbReference>
<dbReference type="EMBL" id="M26730">
    <property type="protein sequence ID" value="AAA60235.1"/>
    <property type="molecule type" value="Genomic_DNA"/>
</dbReference>
<dbReference type="EMBL" id="M35761">
    <property type="protein sequence ID" value="AAA60235.1"/>
    <property type="status" value="JOINED"/>
    <property type="molecule type" value="Genomic_DNA"/>
</dbReference>
<dbReference type="EMBL" id="M26706">
    <property type="protein sequence ID" value="AAA60235.1"/>
    <property type="status" value="JOINED"/>
    <property type="molecule type" value="Genomic_DNA"/>
</dbReference>
<dbReference type="EMBL" id="M26707">
    <property type="protein sequence ID" value="AAA60235.1"/>
    <property type="status" value="JOINED"/>
    <property type="molecule type" value="Genomic_DNA"/>
</dbReference>
<dbReference type="EMBL" id="M26700">
    <property type="protein sequence ID" value="AAA60236.1"/>
    <property type="molecule type" value="mRNA"/>
</dbReference>
<dbReference type="EMBL" id="M26701">
    <property type="protein sequence ID" value="AAA60237.1"/>
    <property type="molecule type" value="Genomic_DNA"/>
</dbReference>
<dbReference type="EMBL" id="AP003465">
    <property type="status" value="NOT_ANNOTATED_CDS"/>
    <property type="molecule type" value="Genomic_DNA"/>
</dbReference>
<dbReference type="EMBL" id="CH471060">
    <property type="protein sequence ID" value="EAW91749.1"/>
    <property type="molecule type" value="Genomic_DNA"/>
</dbReference>
<dbReference type="EMBL" id="BC005230">
    <property type="protein sequence ID" value="AAH05230.1"/>
    <property type="molecule type" value="mRNA"/>
</dbReference>
<dbReference type="EMBL" id="BU535281">
    <property type="status" value="NOT_ANNOTATED_CDS"/>
    <property type="molecule type" value="mRNA"/>
</dbReference>
<dbReference type="EMBL" id="M37387">
    <property type="protein sequence ID" value="AAA60361.1"/>
    <property type="status" value="ALT_SEQ"/>
    <property type="molecule type" value="Genomic_DNA"/>
</dbReference>
<dbReference type="CCDS" id="CCDS59107.1">
    <molecule id="P14927-2"/>
</dbReference>
<dbReference type="CCDS" id="CCDS6269.1">
    <molecule id="P14927-1"/>
</dbReference>
<dbReference type="PIR" id="A32450">
    <property type="entry name" value="A32450"/>
</dbReference>
<dbReference type="RefSeq" id="NP_001186904.1">
    <property type="nucleotide sequence ID" value="NM_001199975.2"/>
</dbReference>
<dbReference type="RefSeq" id="NP_001241681.1">
    <molecule id="P14927-2"/>
    <property type="nucleotide sequence ID" value="NM_001254752.2"/>
</dbReference>
<dbReference type="RefSeq" id="NP_006285.1">
    <molecule id="P14927-1"/>
    <property type="nucleotide sequence ID" value="NM_006294.5"/>
</dbReference>
<dbReference type="PDB" id="5XTE">
    <property type="method" value="EM"/>
    <property type="resolution" value="3.40 A"/>
    <property type="chains" value="F/S=6-111"/>
</dbReference>
<dbReference type="PDB" id="5XTH">
    <property type="method" value="EM"/>
    <property type="resolution" value="3.90 A"/>
    <property type="chains" value="AF/AS=6-111"/>
</dbReference>
<dbReference type="PDB" id="5XTI">
    <property type="method" value="EM"/>
    <property type="resolution" value="17.40 A"/>
    <property type="chains" value="AF/AS=6-111"/>
</dbReference>
<dbReference type="PDBsum" id="5XTE"/>
<dbReference type="PDBsum" id="5XTH"/>
<dbReference type="PDBsum" id="5XTI"/>
<dbReference type="SMR" id="P14927"/>
<dbReference type="BioGRID" id="113227">
    <property type="interactions" value="141"/>
</dbReference>
<dbReference type="ComplexPortal" id="CPX-560">
    <property type="entry name" value="Mitochondrial respiratory chain complex III"/>
</dbReference>
<dbReference type="FunCoup" id="P14927">
    <property type="interactions" value="725"/>
</dbReference>
<dbReference type="IntAct" id="P14927">
    <property type="interactions" value="70"/>
</dbReference>
<dbReference type="MINT" id="P14927"/>
<dbReference type="STRING" id="9606.ENSP00000430494"/>
<dbReference type="BindingDB" id="P14927"/>
<dbReference type="ChEMBL" id="CHEMBL1671612"/>
<dbReference type="DrugBank" id="DB07763">
    <property type="generic name" value="(5S)-3-ANILINO-5-(2,4-DIFLUOROPHENYL)-5-METHYL-1,3-OXAZOLIDINE-2,4-DIONE"/>
</dbReference>
<dbReference type="DrugBank" id="DB07778">
    <property type="generic name" value="(S)-famoxadone"/>
</dbReference>
<dbReference type="DrugBank" id="DB04141">
    <property type="generic name" value="2-Hexyloxy-6-Hydroxymethyl-Tetrahydro-Pyran-3,4,5-Triol"/>
</dbReference>
<dbReference type="DrugBank" id="DB08453">
    <property type="generic name" value="2-Nonyl-4-quinolinol 1-oxide"/>
</dbReference>
<dbReference type="DrugBank" id="DB07636">
    <property type="generic name" value="5-Heptyl-6-hydroxy-1,3-benzothiazole-4,7-dione"/>
</dbReference>
<dbReference type="DrugBank" id="DB04799">
    <property type="generic name" value="6-Hydroxy-5-undecyl-4,7-benzothiazoledione"/>
</dbReference>
<dbReference type="DrugBank" id="DB07401">
    <property type="generic name" value="Azoxystrobin"/>
</dbReference>
<dbReference type="DrugBank" id="DB08330">
    <property type="generic name" value="METHYL (2Z)-3-METHOXY-2-{2-[(E)-2-PHENYLVINYL]PHENYL}ACRYLATE"/>
</dbReference>
<dbReference type="DrugBank" id="DB08690">
    <property type="generic name" value="Ubiquinone Q2"/>
</dbReference>
<dbReference type="CarbonylDB" id="P14927"/>
<dbReference type="GlyGen" id="P14927">
    <property type="glycosylation" value="1 site, 1 O-linked glycan (1 site)"/>
</dbReference>
<dbReference type="iPTMnet" id="P14927"/>
<dbReference type="PhosphoSitePlus" id="P14927"/>
<dbReference type="SwissPalm" id="P14927"/>
<dbReference type="BioMuta" id="UQCRB"/>
<dbReference type="DMDM" id="136717"/>
<dbReference type="jPOST" id="P14927"/>
<dbReference type="MassIVE" id="P14927"/>
<dbReference type="PaxDb" id="9606-ENSP00000430494"/>
<dbReference type="PeptideAtlas" id="P14927"/>
<dbReference type="ProteomicsDB" id="16706"/>
<dbReference type="ProteomicsDB" id="53099">
    <molecule id="P14927-1"/>
</dbReference>
<dbReference type="Pumba" id="P14927"/>
<dbReference type="TopDownProteomics" id="P14927-1">
    <molecule id="P14927-1"/>
</dbReference>
<dbReference type="Antibodypedia" id="42750">
    <property type="antibodies" value="170 antibodies from 28 providers"/>
</dbReference>
<dbReference type="DNASU" id="7381"/>
<dbReference type="Ensembl" id="ENST00000287022.10">
    <molecule id="P14927-1"/>
    <property type="protein sequence ID" value="ENSP00000287022.5"/>
    <property type="gene ID" value="ENSG00000156467.10"/>
</dbReference>
<dbReference type="Ensembl" id="ENST00000518406.5">
    <molecule id="P14927-2"/>
    <property type="protein sequence ID" value="ENSP00000430494.1"/>
    <property type="gene ID" value="ENSG00000156467.10"/>
</dbReference>
<dbReference type="GeneID" id="7381"/>
<dbReference type="KEGG" id="hsa:7381"/>
<dbReference type="MANE-Select" id="ENST00000287022.10">
    <property type="protein sequence ID" value="ENSP00000287022.5"/>
    <property type="RefSeq nucleotide sequence ID" value="NM_006294.5"/>
    <property type="RefSeq protein sequence ID" value="NP_006285.1"/>
</dbReference>
<dbReference type="UCSC" id="uc003yhq.5">
    <molecule id="P14927-1"/>
    <property type="organism name" value="human"/>
</dbReference>
<dbReference type="AGR" id="HGNC:12582"/>
<dbReference type="CTD" id="7381"/>
<dbReference type="DisGeNET" id="7381"/>
<dbReference type="GeneCards" id="UQCRB"/>
<dbReference type="HGNC" id="HGNC:12582">
    <property type="gene designation" value="UQCRB"/>
</dbReference>
<dbReference type="HPA" id="ENSG00000156467">
    <property type="expression patterns" value="Tissue enhanced (skeletal)"/>
</dbReference>
<dbReference type="MalaCards" id="UQCRB"/>
<dbReference type="MIM" id="191330">
    <property type="type" value="gene"/>
</dbReference>
<dbReference type="MIM" id="615158">
    <property type="type" value="phenotype"/>
</dbReference>
<dbReference type="neXtProt" id="NX_P14927"/>
<dbReference type="OpenTargets" id="ENSG00000156467"/>
<dbReference type="Orphanet" id="1460">
    <property type="disease" value="Isolated complex III deficiency"/>
</dbReference>
<dbReference type="PharmGKB" id="PA37213"/>
<dbReference type="VEuPathDB" id="HostDB:ENSG00000156467"/>
<dbReference type="eggNOG" id="KOG3440">
    <property type="taxonomic scope" value="Eukaryota"/>
</dbReference>
<dbReference type="GeneTree" id="ENSGT00390000012916"/>
<dbReference type="HOGENOM" id="CLU_115154_2_0_1"/>
<dbReference type="InParanoid" id="P14927"/>
<dbReference type="OMA" id="PLAQWYT"/>
<dbReference type="OrthoDB" id="425749at2759"/>
<dbReference type="PAN-GO" id="P14927">
    <property type="GO annotations" value="2 GO annotations based on evolutionary models"/>
</dbReference>
<dbReference type="PhylomeDB" id="P14927"/>
<dbReference type="TreeFam" id="TF105035"/>
<dbReference type="BioCyc" id="MetaCyc:HS08128-MONOMER"/>
<dbReference type="BRENDA" id="7.1.1.8">
    <property type="organism ID" value="2681"/>
</dbReference>
<dbReference type="PathwayCommons" id="P14927"/>
<dbReference type="Reactome" id="R-HSA-611105">
    <property type="pathway name" value="Respiratory electron transport"/>
</dbReference>
<dbReference type="Reactome" id="R-HSA-9865881">
    <property type="pathway name" value="Complex III assembly"/>
</dbReference>
<dbReference type="SignaLink" id="P14927"/>
<dbReference type="SIGNOR" id="P14927"/>
<dbReference type="BioGRID-ORCS" id="7381">
    <property type="hits" value="324 hits in 1134 CRISPR screens"/>
</dbReference>
<dbReference type="CD-CODE" id="FB4E32DD">
    <property type="entry name" value="Presynaptic clusters and postsynaptic densities"/>
</dbReference>
<dbReference type="ChiTaRS" id="UQCRB">
    <property type="organism name" value="human"/>
</dbReference>
<dbReference type="GeneWiki" id="UQCRB"/>
<dbReference type="GenomeRNAi" id="7381"/>
<dbReference type="Pharos" id="P14927">
    <property type="development level" value="Tbio"/>
</dbReference>
<dbReference type="PRO" id="PR:P14927"/>
<dbReference type="Proteomes" id="UP000005640">
    <property type="component" value="Chromosome 8"/>
</dbReference>
<dbReference type="RNAct" id="P14927">
    <property type="molecule type" value="protein"/>
</dbReference>
<dbReference type="Bgee" id="ENSG00000156467">
    <property type="expression patterns" value="Expressed in heart right ventricle and 215 other cell types or tissues"/>
</dbReference>
<dbReference type="ExpressionAtlas" id="P14927">
    <property type="expression patterns" value="baseline and differential"/>
</dbReference>
<dbReference type="GO" id="GO:0005743">
    <property type="term" value="C:mitochondrial inner membrane"/>
    <property type="evidence" value="ECO:0000314"/>
    <property type="project" value="ComplexPortal"/>
</dbReference>
<dbReference type="GO" id="GO:0005739">
    <property type="term" value="C:mitochondrion"/>
    <property type="evidence" value="ECO:0006056"/>
    <property type="project" value="FlyBase"/>
</dbReference>
<dbReference type="GO" id="GO:0098803">
    <property type="term" value="C:respiratory chain complex"/>
    <property type="evidence" value="ECO:0000304"/>
    <property type="project" value="ProtInc"/>
</dbReference>
<dbReference type="GO" id="GO:0045275">
    <property type="term" value="C:respiratory chain complex III"/>
    <property type="evidence" value="ECO:0000318"/>
    <property type="project" value="GO_Central"/>
</dbReference>
<dbReference type="GO" id="GO:0009060">
    <property type="term" value="P:aerobic respiration"/>
    <property type="evidence" value="ECO:0000304"/>
    <property type="project" value="ProtInc"/>
</dbReference>
<dbReference type="GO" id="GO:0045333">
    <property type="term" value="P:cellular respiration"/>
    <property type="evidence" value="ECO:0000303"/>
    <property type="project" value="ComplexPortal"/>
</dbReference>
<dbReference type="GO" id="GO:0006122">
    <property type="term" value="P:mitochondrial electron transport, ubiquinol to cytochrome c"/>
    <property type="evidence" value="ECO:0000318"/>
    <property type="project" value="GO_Central"/>
</dbReference>
<dbReference type="GO" id="GO:0006119">
    <property type="term" value="P:oxidative phosphorylation"/>
    <property type="evidence" value="ECO:0000304"/>
    <property type="project" value="ProtInc"/>
</dbReference>
<dbReference type="FunFam" id="1.10.1090.10:FF:000001">
    <property type="entry name" value="Cytochrome b-c1 complex subunit 7"/>
    <property type="match status" value="1"/>
</dbReference>
<dbReference type="Gene3D" id="1.10.1090.10">
    <property type="entry name" value="Cytochrome b-c1 complex subunit 7"/>
    <property type="match status" value="1"/>
</dbReference>
<dbReference type="InterPro" id="IPR003197">
    <property type="entry name" value="QCR7"/>
</dbReference>
<dbReference type="InterPro" id="IPR036544">
    <property type="entry name" value="QCR7_sf"/>
</dbReference>
<dbReference type="PANTHER" id="PTHR12022:SF12">
    <property type="entry name" value="CYTOCHROME B-C1 COMPLEX SUBUNIT 7"/>
    <property type="match status" value="1"/>
</dbReference>
<dbReference type="PANTHER" id="PTHR12022">
    <property type="entry name" value="UBIQUINOL-CYTOCHROME C REDUCTASE COMPLEX 14 KD PROTEIN"/>
    <property type="match status" value="1"/>
</dbReference>
<dbReference type="Pfam" id="PF02271">
    <property type="entry name" value="UCR_14kD"/>
    <property type="match status" value="1"/>
</dbReference>
<dbReference type="PIRSF" id="PIRSF000022">
    <property type="entry name" value="Bc1_14K"/>
    <property type="match status" value="1"/>
</dbReference>
<dbReference type="SUPFAM" id="SSF81524">
    <property type="entry name" value="14 kDa protein of cytochrome bc1 complex (Ubiquinol-cytochrome c reductase)"/>
    <property type="match status" value="1"/>
</dbReference>
<reference key="1">
    <citation type="journal article" date="1988" name="Biochem. Biophys. Res. Commun.">
        <title>Cloning and sequencing of a cDNA for human mitochondrial ubiquinone-binding protein of complex III.</title>
        <authorList>
            <person name="Suzuki H."/>
            <person name="Yoshitaka H."/>
            <person name="Toda H."/>
            <person name="Nishikimi M."/>
            <person name="Ozawa T."/>
        </authorList>
    </citation>
    <scope>NUCLEOTIDE SEQUENCE [MRNA] (ISOFORM 1)</scope>
    <source>
        <tissue>Fibroblast</tissue>
    </source>
</reference>
<reference key="2">
    <citation type="journal article" date="1989" name="Biochem. Biophys. Res. Commun.">
        <title>Isolation of a single nuclear gene encoding human ubiquinone-binding protein in complex III of mitochondrial respiratory chain.</title>
        <authorList>
            <person name="Suzuki H."/>
            <person name="Hosokawa Y."/>
            <person name="Toda H."/>
            <person name="Nishikimi M."/>
            <person name="Ozawa T."/>
        </authorList>
    </citation>
    <scope>NUCLEOTIDE SEQUENCE [GENOMIC DNA / MRNA] (ISOFORM 1)</scope>
</reference>
<reference key="3">
    <citation type="submission" date="2004-06" db="EMBL/GenBank/DDBJ databases">
        <title>Cloning of human full open reading frames in Gateway(TM) system entry vector (pDONR201).</title>
        <authorList>
            <person name="Ebert L."/>
            <person name="Schick M."/>
            <person name="Neubert P."/>
            <person name="Schatten R."/>
            <person name="Henze S."/>
            <person name="Korn B."/>
        </authorList>
    </citation>
    <scope>NUCLEOTIDE SEQUENCE [LARGE SCALE MRNA] (ISOFORM 1)</scope>
</reference>
<reference key="4">
    <citation type="journal article" date="2006" name="Nature">
        <title>DNA sequence and analysis of human chromosome 8.</title>
        <authorList>
            <person name="Nusbaum C."/>
            <person name="Mikkelsen T.S."/>
            <person name="Zody M.C."/>
            <person name="Asakawa S."/>
            <person name="Taudien S."/>
            <person name="Garber M."/>
            <person name="Kodira C.D."/>
            <person name="Schueler M.G."/>
            <person name="Shimizu A."/>
            <person name="Whittaker C.A."/>
            <person name="Chang J.L."/>
            <person name="Cuomo C.A."/>
            <person name="Dewar K."/>
            <person name="FitzGerald M.G."/>
            <person name="Yang X."/>
            <person name="Allen N.R."/>
            <person name="Anderson S."/>
            <person name="Asakawa T."/>
            <person name="Blechschmidt K."/>
            <person name="Bloom T."/>
            <person name="Borowsky M.L."/>
            <person name="Butler J."/>
            <person name="Cook A."/>
            <person name="Corum B."/>
            <person name="DeArellano K."/>
            <person name="DeCaprio D."/>
            <person name="Dooley K.T."/>
            <person name="Dorris L. III"/>
            <person name="Engels R."/>
            <person name="Gloeckner G."/>
            <person name="Hafez N."/>
            <person name="Hagopian D.S."/>
            <person name="Hall J.L."/>
            <person name="Ishikawa S.K."/>
            <person name="Jaffe D.B."/>
            <person name="Kamat A."/>
            <person name="Kudoh J."/>
            <person name="Lehmann R."/>
            <person name="Lokitsang T."/>
            <person name="Macdonald P."/>
            <person name="Major J.E."/>
            <person name="Matthews C.D."/>
            <person name="Mauceli E."/>
            <person name="Menzel U."/>
            <person name="Mihalev A.H."/>
            <person name="Minoshima S."/>
            <person name="Murayama Y."/>
            <person name="Naylor J.W."/>
            <person name="Nicol R."/>
            <person name="Nguyen C."/>
            <person name="O'Leary S.B."/>
            <person name="O'Neill K."/>
            <person name="Parker S.C.J."/>
            <person name="Polley A."/>
            <person name="Raymond C.K."/>
            <person name="Reichwald K."/>
            <person name="Rodriguez J."/>
            <person name="Sasaki T."/>
            <person name="Schilhabel M."/>
            <person name="Siddiqui R."/>
            <person name="Smith C.L."/>
            <person name="Sneddon T.P."/>
            <person name="Talamas J.A."/>
            <person name="Tenzin P."/>
            <person name="Topham K."/>
            <person name="Venkataraman V."/>
            <person name="Wen G."/>
            <person name="Yamazaki S."/>
            <person name="Young S.K."/>
            <person name="Zeng Q."/>
            <person name="Zimmer A.R."/>
            <person name="Rosenthal A."/>
            <person name="Birren B.W."/>
            <person name="Platzer M."/>
            <person name="Shimizu N."/>
            <person name="Lander E.S."/>
        </authorList>
    </citation>
    <scope>NUCLEOTIDE SEQUENCE [LARGE SCALE GENOMIC DNA]</scope>
</reference>
<reference key="5">
    <citation type="submission" date="2005-07" db="EMBL/GenBank/DDBJ databases">
        <authorList>
            <person name="Mural R.J."/>
            <person name="Istrail S."/>
            <person name="Sutton G.G."/>
            <person name="Florea L."/>
            <person name="Halpern A.L."/>
            <person name="Mobarry C.M."/>
            <person name="Lippert R."/>
            <person name="Walenz B."/>
            <person name="Shatkay H."/>
            <person name="Dew I."/>
            <person name="Miller J.R."/>
            <person name="Flanigan M.J."/>
            <person name="Edwards N.J."/>
            <person name="Bolanos R."/>
            <person name="Fasulo D."/>
            <person name="Halldorsson B.V."/>
            <person name="Hannenhalli S."/>
            <person name="Turner R."/>
            <person name="Yooseph S."/>
            <person name="Lu F."/>
            <person name="Nusskern D.R."/>
            <person name="Shue B.C."/>
            <person name="Zheng X.H."/>
            <person name="Zhong F."/>
            <person name="Delcher A.L."/>
            <person name="Huson D.H."/>
            <person name="Kravitz S.A."/>
            <person name="Mouchard L."/>
            <person name="Reinert K."/>
            <person name="Remington K.A."/>
            <person name="Clark A.G."/>
            <person name="Waterman M.S."/>
            <person name="Eichler E.E."/>
            <person name="Adams M.D."/>
            <person name="Hunkapiller M.W."/>
            <person name="Myers E.W."/>
            <person name="Venter J.C."/>
        </authorList>
    </citation>
    <scope>NUCLEOTIDE SEQUENCE [LARGE SCALE GENOMIC DNA]</scope>
</reference>
<reference key="6">
    <citation type="journal article" date="2004" name="Genome Res.">
        <title>The status, quality, and expansion of the NIH full-length cDNA project: the Mammalian Gene Collection (MGC).</title>
        <authorList>
            <consortium name="The MGC Project Team"/>
        </authorList>
    </citation>
    <scope>NUCLEOTIDE SEQUENCE [LARGE SCALE MRNA] (ISOFORMS 1 AND 2)</scope>
    <source>
        <tissue>Urinary bladder</tissue>
    </source>
</reference>
<reference key="7">
    <citation type="journal article" date="1990" name="J. Biol. Chem.">
        <title>Common protein-binding sites in the 5'-flanking regions of human genes for cytochrome c1 and ubiquinone-binding protein.</title>
        <authorList>
            <person name="Suzuki H."/>
            <person name="Hosokawa Y."/>
            <person name="Toda H."/>
            <person name="Nishikimi M."/>
            <person name="Ozawa T."/>
        </authorList>
    </citation>
    <scope>NUCLEOTIDE SEQUENCE [GENOMIC DNA] OF 1-6</scope>
</reference>
<reference key="8">
    <citation type="journal article" date="2003" name="Hum. Genet.">
        <title>A deletion in the human QP-C gene causes a complex III deficiency resulting in hypoglycaemia and lactic acidosis.</title>
        <authorList>
            <person name="Haut S."/>
            <person name="Brivet M."/>
            <person name="Touati G."/>
            <person name="Rustin P."/>
            <person name="Lebon S."/>
            <person name="Garcia-Cazorla A."/>
            <person name="Saudubray J.-M."/>
            <person name="Boutron A."/>
            <person name="Legrand A."/>
            <person name="Slama A."/>
        </authorList>
    </citation>
    <scope>INVOLVEMENT IN MC3DN3</scope>
</reference>
<reference key="9">
    <citation type="journal article" date="2011" name="BMC Syst. Biol.">
        <title>Initial characterization of the human central proteome.</title>
        <authorList>
            <person name="Burkard T.R."/>
            <person name="Planyavsky M."/>
            <person name="Kaupe I."/>
            <person name="Breitwieser F.P."/>
            <person name="Buerckstuemmer T."/>
            <person name="Bennett K.L."/>
            <person name="Superti-Furga G."/>
            <person name="Colinge J."/>
        </authorList>
    </citation>
    <scope>IDENTIFICATION BY MASS SPECTROMETRY [LARGE SCALE ANALYSIS]</scope>
</reference>
<reference key="10">
    <citation type="journal article" date="2014" name="J. Proteomics">
        <title>An enzyme assisted RP-RPLC approach for in-depth analysis of human liver phosphoproteome.</title>
        <authorList>
            <person name="Bian Y."/>
            <person name="Song C."/>
            <person name="Cheng K."/>
            <person name="Dong M."/>
            <person name="Wang F."/>
            <person name="Huang J."/>
            <person name="Sun D."/>
            <person name="Wang L."/>
            <person name="Ye M."/>
            <person name="Zou H."/>
        </authorList>
    </citation>
    <scope>IDENTIFICATION BY MASS SPECTROMETRY [LARGE SCALE ANALYSIS]</scope>
    <source>
        <tissue>Liver</tissue>
    </source>
</reference>
<reference key="11">
    <citation type="journal article" date="2015" name="Proteomics">
        <title>N-terminome analysis of the human mitochondrial proteome.</title>
        <authorList>
            <person name="Vaca Jacome A.S."/>
            <person name="Rabilloud T."/>
            <person name="Schaeffer-Reiss C."/>
            <person name="Rompais M."/>
            <person name="Ayoub D."/>
            <person name="Lane L."/>
            <person name="Bairoch A."/>
            <person name="Van Dorsselaer A."/>
            <person name="Carapito C."/>
        </authorList>
    </citation>
    <scope>IDENTIFICATION BY MASS SPECTROMETRY [LARGE SCALE ANALYSIS]</scope>
</reference>
<reference key="12">
    <citation type="journal article" date="2017" name="Cell">
        <title>Architecture of human mitochondrial respiratory megacomplex I2III2IV2.</title>
        <authorList>
            <person name="Guo R."/>
            <person name="Zong S."/>
            <person name="Wu M."/>
            <person name="Gu J."/>
            <person name="Yang M."/>
        </authorList>
    </citation>
    <scope>STRUCTURE BY ELECTRON MICROSCOPY (3.40 ANGSTROMS) OF 6-111</scope>
</reference>
<proteinExistence type="evidence at protein level"/>
<evidence type="ECO:0000250" key="1">
    <source>
        <dbReference type="UniProtKB" id="P00128"/>
    </source>
</evidence>
<evidence type="ECO:0000250" key="2">
    <source>
        <dbReference type="UniProtKB" id="P00129"/>
    </source>
</evidence>
<evidence type="ECO:0000250" key="3">
    <source>
        <dbReference type="UniProtKB" id="Q9D855"/>
    </source>
</evidence>
<evidence type="ECO:0000269" key="4">
    <source>
    </source>
</evidence>
<evidence type="ECO:0000269" key="5">
    <source>
    </source>
</evidence>
<evidence type="ECO:0000303" key="6">
    <source>
    </source>
</evidence>
<evidence type="ECO:0000305" key="7"/>
<evidence type="ECO:0007829" key="8">
    <source>
        <dbReference type="PDB" id="5XTE"/>
    </source>
</evidence>
<comment type="function">
    <text evidence="1">Component of the ubiquinol-cytochrome c oxidoreductase, a multisubunit transmembrane complex that is part of the mitochondrial electron transport chain which drives oxidative phosphorylation. The respiratory chain contains 3 multisubunit complexes succinate dehydrogenase (complex II, CII), ubiquinol-cytochrome c oxidoreductase (cytochrome b-c1 complex, complex III, CIII) and cytochrome c oxidase (complex IV, CIV), that cooperate to transfer electrons derived from NADH and succinate to molecular oxygen, creating an electrochemical gradient over the inner membrane that drives transmembrane transport and the ATP synthase. The cytochrome b-c1 complex catalyzes electron transfer from ubiquinol to cytochrome c, linking this redox reaction to translocation of protons across the mitochondrial inner membrane, with protons being carried across the membrane as hydrogens on the quinol. In the process called Q cycle, 2 protons are consumed from the matrix, 4 protons are released into the intermembrane space and 2 electrons are passed to cytochrome c.</text>
</comment>
<comment type="subunit">
    <text evidence="2 5">Component of the ubiquinol-cytochrome c oxidoreductase (cytochrome b-c1 complex, complex III, CIII), a multisubunit enzyme composed of 11 subunits. The complex is composed of 3 respiratory subunits cytochrome b, cytochrome c1 and Rieske protein UQCRFS1, 2 core protein subunits UQCRC1/QCR1 and UQCRC2/QCR2, and 6 low-molecular weight protein subunits UQCRH/QCR6, UQCRB/QCR7, UQCRQ/QCR8, UQCR10/QCR9, UQCR11/QCR10 and subunit 9, the cleavage product of Rieske protein UQCRFS1 (By similarity). The complex exists as an obligatory dimer and forms supercomplexes (SCs) in the inner mitochondrial membrane with NADH-ubiquinone oxidoreductase (complex I, CI) and cytochrome c oxidase (complex IV, CIV), resulting in different assemblies (supercomplex SCI(1)III(2)IV(1) and megacomplex MCI(2)III(2)IV(2)) (PubMed:28844695).</text>
</comment>
<comment type="interaction">
    <interactant intactId="EBI-743128">
        <id>P14927</id>
    </interactant>
    <interactant intactId="EBI-751746">
        <id>Q15027</id>
        <label>ACAP1</label>
    </interactant>
    <organismsDiffer>false</organismsDiffer>
    <experiments>3</experiments>
</comment>
<comment type="interaction">
    <interactant intactId="EBI-743128">
        <id>P14927</id>
    </interactant>
    <interactant intactId="EBI-743387">
        <id>Q96QU6</id>
        <label>ACCS</label>
    </interactant>
    <organismsDiffer>false</organismsDiffer>
    <experiments>3</experiments>
</comment>
<comment type="interaction">
    <interactant intactId="EBI-743128">
        <id>P14927</id>
    </interactant>
    <interactant intactId="EBI-949378">
        <id>Q14457</id>
        <label>BECN1</label>
    </interactant>
    <organismsDiffer>false</organismsDiffer>
    <experiments>3</experiments>
</comment>
<comment type="interaction">
    <interactant intactId="EBI-743128">
        <id>P14927</id>
    </interactant>
    <interactant intactId="EBI-1224514">
        <id>P08574</id>
        <label>CYC1</label>
    </interactant>
    <organismsDiffer>false</organismsDiffer>
    <experiments>3</experiments>
</comment>
<comment type="interaction">
    <interactant intactId="EBI-743128">
        <id>P14927</id>
    </interactant>
    <interactant intactId="EBI-21529239">
        <id>Q86TI2-2</id>
        <label>DPP9</label>
    </interactant>
    <organismsDiffer>false</organismsDiffer>
    <experiments>3</experiments>
</comment>
<comment type="interaction">
    <interactant intactId="EBI-743128">
        <id>P14927</id>
    </interactant>
    <interactant intactId="EBI-10691738">
        <id>P06241-3</id>
        <label>FYN</label>
    </interactant>
    <organismsDiffer>false</organismsDiffer>
    <experiments>3</experiments>
</comment>
<comment type="interaction">
    <interactant intactId="EBI-743128">
        <id>P14927</id>
    </interactant>
    <interactant intactId="EBI-2857315">
        <id>Q9BRX5</id>
        <label>GINS3</label>
    </interactant>
    <organismsDiffer>false</organismsDiffer>
    <experiments>3</experiments>
</comment>
<comment type="interaction">
    <interactant intactId="EBI-743128">
        <id>P14927</id>
    </interactant>
    <interactant intactId="EBI-12197079">
        <id>P84074</id>
        <label>HPCA</label>
    </interactant>
    <organismsDiffer>false</organismsDiffer>
    <experiments>3</experiments>
</comment>
<comment type="interaction">
    <interactant intactId="EBI-743128">
        <id>P14927</id>
    </interactant>
    <interactant intactId="EBI-712105">
        <id>Q13352</id>
        <label>ITGB3BP</label>
    </interactant>
    <organismsDiffer>false</organismsDiffer>
    <experiments>3</experiments>
</comment>
<comment type="interaction">
    <interactant intactId="EBI-743128">
        <id>P14927</id>
    </interactant>
    <interactant intactId="EBI-25844799">
        <id>A1A512</id>
        <label>KIAA0355</label>
    </interactant>
    <organismsDiffer>false</organismsDiffer>
    <experiments>3</experiments>
</comment>
<comment type="interaction">
    <interactant intactId="EBI-743128">
        <id>P14927</id>
    </interactant>
    <interactant intactId="EBI-723416">
        <id>Q15012</id>
        <label>LAPTM4A</label>
    </interactant>
    <organismsDiffer>false</organismsDiffer>
    <experiments>3</experiments>
</comment>
<comment type="interaction">
    <interactant intactId="EBI-743128">
        <id>P14927</id>
    </interactant>
    <interactant intactId="EBI-1052558">
        <id>Q92615</id>
        <label>LARP4B</label>
    </interactant>
    <organismsDiffer>false</organismsDiffer>
    <experiments>3</experiments>
</comment>
<comment type="interaction">
    <interactant intactId="EBI-743128">
        <id>P14927</id>
    </interactant>
    <interactant intactId="EBI-743122">
        <id>P43358</id>
        <label>MAGEA4</label>
    </interactant>
    <organismsDiffer>false</organismsDiffer>
    <experiments>7</experiments>
</comment>
<comment type="interaction">
    <interactant intactId="EBI-743128">
        <id>P14927</id>
    </interactant>
    <interactant intactId="EBI-10194128">
        <id>Q1RN33</id>
        <label>MAGEA4</label>
    </interactant>
    <organismsDiffer>false</organismsDiffer>
    <experiments>3</experiments>
</comment>
<comment type="interaction">
    <interactant intactId="EBI-743128">
        <id>P14927</id>
    </interactant>
    <interactant intactId="EBI-751857">
        <id>O15481</id>
        <label>MAGEB4</label>
    </interactant>
    <organismsDiffer>false</organismsDiffer>
    <experiments>3</experiments>
</comment>
<comment type="interaction">
    <interactant intactId="EBI-743128">
        <id>P14927</id>
    </interactant>
    <interactant intactId="EBI-17438286">
        <id>Q8WTV1</id>
        <label>THAP3</label>
    </interactant>
    <organismsDiffer>false</organismsDiffer>
    <experiments>3</experiments>
</comment>
<comment type="interaction">
    <interactant intactId="EBI-743128">
        <id>P14927</id>
    </interactant>
    <interactant intactId="EBI-5281647">
        <id>Q19AV6</id>
        <label>ZSWIM7</label>
    </interactant>
    <organismsDiffer>false</organismsDiffer>
    <experiments>3</experiments>
</comment>
<comment type="subcellular location">
    <subcellularLocation>
        <location evidence="1">Mitochondrion inner membrane</location>
        <topology evidence="1">Peripheral membrane protein</topology>
        <orientation evidence="1">Matrix side</orientation>
    </subcellularLocation>
</comment>
<comment type="alternative products">
    <event type="alternative splicing"/>
    <isoform>
        <id>P14927-1</id>
        <name>1</name>
        <sequence type="displayed"/>
    </isoform>
    <isoform>
        <id>P14927-2</id>
        <name>2</name>
        <sequence type="described" ref="VSP_045601"/>
    </isoform>
</comment>
<comment type="disease" evidence="4">
    <disease id="DI-03736">
        <name>Mitochondrial complex III deficiency, nuclear type 3</name>
        <acronym>MC3DN3</acronym>
        <description>A disorder of the mitochondrial respiratory chain resulting in a highly variable phenotype depending on which tissues are affected. Clinical features include mitochondrial encephalopathy, psychomotor retardation, ataxia, severe failure to thrive, liver dysfunction, renal tubulopathy, muscle weakness and exercise intolerance.</description>
        <dbReference type="MIM" id="615158"/>
    </disease>
    <text>The disease is caused by variants affecting the gene represented in this entry.</text>
</comment>
<comment type="similarity">
    <text evidence="7">Belongs to the UQCRB/QCR7 family.</text>
</comment>
<comment type="caution">
    <text evidence="7">Was originally thought to be the ubiquinone-binding protein (QP-C).</text>
</comment>
<feature type="initiator methionine" description="Removed" evidence="2">
    <location>
        <position position="1"/>
    </location>
</feature>
<feature type="chain" id="PRO_0000193524" description="Cytochrome b-c1 complex subunit 7">
    <location>
        <begin position="2"/>
        <end position="111"/>
    </location>
</feature>
<feature type="modified residue" description="N-acetylalanine" evidence="2">
    <location>
        <position position="2"/>
    </location>
</feature>
<feature type="modified residue" description="N6-acetyllysine; alternate" evidence="3">
    <location>
        <position position="12"/>
    </location>
</feature>
<feature type="modified residue" description="N6-succinyllysine; alternate" evidence="3">
    <location>
        <position position="12"/>
    </location>
</feature>
<feature type="modified residue" description="N6-acetyllysine" evidence="3">
    <location>
        <position position="19"/>
    </location>
</feature>
<feature type="modified residue" description="N6-acetyllysine; alternate" evidence="3">
    <location>
        <position position="78"/>
    </location>
</feature>
<feature type="modified residue" description="N6-succinyllysine; alternate" evidence="3">
    <location>
        <position position="78"/>
    </location>
</feature>
<feature type="modified residue" description="N6-acetyllysine" evidence="3">
    <location>
        <position position="83"/>
    </location>
</feature>
<feature type="modified residue" description="N6-acetyllysine" evidence="3">
    <location>
        <position position="96"/>
    </location>
</feature>
<feature type="splice variant" id="VSP_045601" description="In isoform 2." evidence="6">
    <original>ENFYLEPYLKEVIRERKEREEWAKK</original>
    <variation>VFAVPALHSASYLDEKISPLSVPPDPKKSFCEANSHPLNCIETRQRKISTLNRI</variation>
    <location>
        <begin position="87"/>
        <end position="111"/>
    </location>
</feature>
<feature type="sequence variant" id="VAR_052443" description="In dbSNP:rs35895613.">
    <original>L</original>
    <variation>P</variation>
    <location>
        <position position="30"/>
    </location>
</feature>
<feature type="sequence conflict" description="In Ref. 2; AAA60236." evidence="7" ref="2">
    <original>A</original>
    <variation>G</variation>
    <location>
        <position position="6"/>
    </location>
</feature>
<feature type="helix" evidence="8">
    <location>
        <begin position="11"/>
        <end position="24"/>
    </location>
</feature>
<feature type="helix" evidence="8">
    <location>
        <begin position="27"/>
        <end position="30"/>
    </location>
</feature>
<feature type="helix" evidence="8">
    <location>
        <begin position="34"/>
        <end position="37"/>
    </location>
</feature>
<feature type="helix" evidence="8">
    <location>
        <begin position="42"/>
        <end position="50"/>
    </location>
</feature>
<feature type="helix" evidence="8">
    <location>
        <begin position="53"/>
        <end position="72"/>
    </location>
</feature>
<feature type="helix" evidence="8">
    <location>
        <begin position="78"/>
        <end position="80"/>
    </location>
</feature>
<feature type="turn" evidence="8">
    <location>
        <begin position="84"/>
        <end position="86"/>
    </location>
</feature>
<feature type="helix" evidence="8">
    <location>
        <begin position="92"/>
        <end position="109"/>
    </location>
</feature>
<protein>
    <recommendedName>
        <fullName>Cytochrome b-c1 complex subunit 7</fullName>
    </recommendedName>
    <alternativeName>
        <fullName>Complex III subunit 7</fullName>
    </alternativeName>
    <alternativeName>
        <fullName>Complex III subunit VII</fullName>
    </alternativeName>
    <alternativeName>
        <fullName>QP-C</fullName>
    </alternativeName>
    <alternativeName>
        <fullName>Ubiquinol-cytochrome c reductase complex 14 kDa protein</fullName>
    </alternativeName>
</protein>
<keyword id="KW-0002">3D-structure</keyword>
<keyword id="KW-0007">Acetylation</keyword>
<keyword id="KW-0025">Alternative splicing</keyword>
<keyword id="KW-0249">Electron transport</keyword>
<keyword id="KW-0472">Membrane</keyword>
<keyword id="KW-0496">Mitochondrion</keyword>
<keyword id="KW-0999">Mitochondrion inner membrane</keyword>
<keyword id="KW-1274">Primary mitochondrial disease</keyword>
<keyword id="KW-1267">Proteomics identification</keyword>
<keyword id="KW-1185">Reference proteome</keyword>
<keyword id="KW-0679">Respiratory chain</keyword>
<keyword id="KW-0813">Transport</keyword>
<gene>
    <name type="primary">UQCRB</name>
    <name type="synonym">UQBP</name>
</gene>
<name>QCR7_HUMAN</name>
<sequence length="111" mass="13530">MAGKQAVSASGKWLDGIRKWYYNAAGFNKLGLMRDDTIYEDEDVKEAIRRLPENLYNDRMFRIKRALDLNLKHQILPKEQWTKYEEENFYLEPYLKEVIRERKEREEWAKK</sequence>
<organism>
    <name type="scientific">Homo sapiens</name>
    <name type="common">Human</name>
    <dbReference type="NCBI Taxonomy" id="9606"/>
    <lineage>
        <taxon>Eukaryota</taxon>
        <taxon>Metazoa</taxon>
        <taxon>Chordata</taxon>
        <taxon>Craniata</taxon>
        <taxon>Vertebrata</taxon>
        <taxon>Euteleostomi</taxon>
        <taxon>Mammalia</taxon>
        <taxon>Eutheria</taxon>
        <taxon>Euarchontoglires</taxon>
        <taxon>Primates</taxon>
        <taxon>Haplorrhini</taxon>
        <taxon>Catarrhini</taxon>
        <taxon>Hominidae</taxon>
        <taxon>Homo</taxon>
    </lineage>
</organism>
<accession>P14927</accession>
<accession>E5RJU0</accession>
<accession>Q6FGD1</accession>